<keyword id="KW-0927">Auxin signaling pathway</keyword>
<keyword id="KW-0539">Nucleus</keyword>
<keyword id="KW-1185">Reference proteome</keyword>
<keyword id="KW-0678">Repressor</keyword>
<keyword id="KW-0804">Transcription</keyword>
<keyword id="KW-0805">Transcription regulation</keyword>
<organism>
    <name type="scientific">Oryza sativa subsp. japonica</name>
    <name type="common">Rice</name>
    <dbReference type="NCBI Taxonomy" id="39947"/>
    <lineage>
        <taxon>Eukaryota</taxon>
        <taxon>Viridiplantae</taxon>
        <taxon>Streptophyta</taxon>
        <taxon>Embryophyta</taxon>
        <taxon>Tracheophyta</taxon>
        <taxon>Spermatophyta</taxon>
        <taxon>Magnoliopsida</taxon>
        <taxon>Liliopsida</taxon>
        <taxon>Poales</taxon>
        <taxon>Poaceae</taxon>
        <taxon>BOP clade</taxon>
        <taxon>Oryzoideae</taxon>
        <taxon>Oryzeae</taxon>
        <taxon>Oryzinae</taxon>
        <taxon>Oryza</taxon>
        <taxon>Oryza sativa</taxon>
    </lineage>
</organism>
<sequence length="182" mass="19347">MELELGLAPPNSGHLVVDELSSSSSSGGGSGSAPVSASSAGKRGFREAFQETLLLFDDGSCCNTSDDDCRRRKKTVVGWPPVSSARRACGGANYVKVKKEGDAIGRKVDLALHSSYDELAATLARMFPTNDHQGEKKMANDDHGDAAGPVVTYEDGDGDWMLVGDVPWDDFARSVKRLKILG</sequence>
<protein>
    <recommendedName>
        <fullName>Auxin-responsive protein IAA9</fullName>
    </recommendedName>
    <alternativeName>
        <fullName>Indoleacetic acid-induced protein 9</fullName>
    </alternativeName>
</protein>
<gene>
    <name type="primary">IAA9</name>
    <name type="ordered locus">Os02g0805100</name>
    <name type="ordered locus">LOC_Os02g56120</name>
    <name type="ORF">OJ1548_F12.17</name>
    <name evidence="6" type="ORF">OsJ_08776</name>
    <name type="ORF">OSJNBa0049O12.20</name>
</gene>
<reference key="1">
    <citation type="journal article" date="2005" name="Nature">
        <title>The map-based sequence of the rice genome.</title>
        <authorList>
            <consortium name="International rice genome sequencing project (IRGSP)"/>
        </authorList>
    </citation>
    <scope>NUCLEOTIDE SEQUENCE [LARGE SCALE GENOMIC DNA]</scope>
    <source>
        <strain>cv. Nipponbare</strain>
    </source>
</reference>
<reference key="2">
    <citation type="journal article" date="2008" name="Nucleic Acids Res.">
        <title>The rice annotation project database (RAP-DB): 2008 update.</title>
        <authorList>
            <consortium name="The rice annotation project (RAP)"/>
        </authorList>
    </citation>
    <scope>GENOME REANNOTATION</scope>
    <source>
        <strain>cv. Nipponbare</strain>
    </source>
</reference>
<reference key="3">
    <citation type="journal article" date="2013" name="Rice">
        <title>Improvement of the Oryza sativa Nipponbare reference genome using next generation sequence and optical map data.</title>
        <authorList>
            <person name="Kawahara Y."/>
            <person name="de la Bastide M."/>
            <person name="Hamilton J.P."/>
            <person name="Kanamori H."/>
            <person name="McCombie W.R."/>
            <person name="Ouyang S."/>
            <person name="Schwartz D.C."/>
            <person name="Tanaka T."/>
            <person name="Wu J."/>
            <person name="Zhou S."/>
            <person name="Childs K.L."/>
            <person name="Davidson R.M."/>
            <person name="Lin H."/>
            <person name="Quesada-Ocampo L."/>
            <person name="Vaillancourt B."/>
            <person name="Sakai H."/>
            <person name="Lee S.S."/>
            <person name="Kim J."/>
            <person name="Numa H."/>
            <person name="Itoh T."/>
            <person name="Buell C.R."/>
            <person name="Matsumoto T."/>
        </authorList>
    </citation>
    <scope>GENOME REANNOTATION</scope>
    <source>
        <strain>cv. Nipponbare</strain>
    </source>
</reference>
<reference key="4">
    <citation type="journal article" date="2005" name="PLoS Biol.">
        <title>The genomes of Oryza sativa: a history of duplications.</title>
        <authorList>
            <person name="Yu J."/>
            <person name="Wang J."/>
            <person name="Lin W."/>
            <person name="Li S."/>
            <person name="Li H."/>
            <person name="Zhou J."/>
            <person name="Ni P."/>
            <person name="Dong W."/>
            <person name="Hu S."/>
            <person name="Zeng C."/>
            <person name="Zhang J."/>
            <person name="Zhang Y."/>
            <person name="Li R."/>
            <person name="Xu Z."/>
            <person name="Li S."/>
            <person name="Li X."/>
            <person name="Zheng H."/>
            <person name="Cong L."/>
            <person name="Lin L."/>
            <person name="Yin J."/>
            <person name="Geng J."/>
            <person name="Li G."/>
            <person name="Shi J."/>
            <person name="Liu J."/>
            <person name="Lv H."/>
            <person name="Li J."/>
            <person name="Wang J."/>
            <person name="Deng Y."/>
            <person name="Ran L."/>
            <person name="Shi X."/>
            <person name="Wang X."/>
            <person name="Wu Q."/>
            <person name="Li C."/>
            <person name="Ren X."/>
            <person name="Wang J."/>
            <person name="Wang X."/>
            <person name="Li D."/>
            <person name="Liu D."/>
            <person name="Zhang X."/>
            <person name="Ji Z."/>
            <person name="Zhao W."/>
            <person name="Sun Y."/>
            <person name="Zhang Z."/>
            <person name="Bao J."/>
            <person name="Han Y."/>
            <person name="Dong L."/>
            <person name="Ji J."/>
            <person name="Chen P."/>
            <person name="Wu S."/>
            <person name="Liu J."/>
            <person name="Xiao Y."/>
            <person name="Bu D."/>
            <person name="Tan J."/>
            <person name="Yang L."/>
            <person name="Ye C."/>
            <person name="Zhang J."/>
            <person name="Xu J."/>
            <person name="Zhou Y."/>
            <person name="Yu Y."/>
            <person name="Zhang B."/>
            <person name="Zhuang S."/>
            <person name="Wei H."/>
            <person name="Liu B."/>
            <person name="Lei M."/>
            <person name="Yu H."/>
            <person name="Li Y."/>
            <person name="Xu H."/>
            <person name="Wei S."/>
            <person name="He X."/>
            <person name="Fang L."/>
            <person name="Zhang Z."/>
            <person name="Zhang Y."/>
            <person name="Huang X."/>
            <person name="Su Z."/>
            <person name="Tong W."/>
            <person name="Li J."/>
            <person name="Tong Z."/>
            <person name="Li S."/>
            <person name="Ye J."/>
            <person name="Wang L."/>
            <person name="Fang L."/>
            <person name="Lei T."/>
            <person name="Chen C.-S."/>
            <person name="Chen H.-C."/>
            <person name="Xu Z."/>
            <person name="Li H."/>
            <person name="Huang H."/>
            <person name="Zhang F."/>
            <person name="Xu H."/>
            <person name="Li N."/>
            <person name="Zhao C."/>
            <person name="Li S."/>
            <person name="Dong L."/>
            <person name="Huang Y."/>
            <person name="Li L."/>
            <person name="Xi Y."/>
            <person name="Qi Q."/>
            <person name="Li W."/>
            <person name="Zhang B."/>
            <person name="Hu W."/>
            <person name="Zhang Y."/>
            <person name="Tian X."/>
            <person name="Jiao Y."/>
            <person name="Liang X."/>
            <person name="Jin J."/>
            <person name="Gao L."/>
            <person name="Zheng W."/>
            <person name="Hao B."/>
            <person name="Liu S.-M."/>
            <person name="Wang W."/>
            <person name="Yuan L."/>
            <person name="Cao M."/>
            <person name="McDermott J."/>
            <person name="Samudrala R."/>
            <person name="Wang J."/>
            <person name="Wong G.K.-S."/>
            <person name="Yang H."/>
        </authorList>
    </citation>
    <scope>NUCLEOTIDE SEQUENCE [LARGE SCALE GENOMIC DNA]</scope>
    <source>
        <strain>cv. Nipponbare</strain>
    </source>
</reference>
<reference key="5">
    <citation type="journal article" date="2003" name="Science">
        <title>Collection, mapping, and annotation of over 28,000 cDNA clones from japonica rice.</title>
        <authorList>
            <consortium name="The rice full-length cDNA consortium"/>
        </authorList>
    </citation>
    <scope>NUCLEOTIDE SEQUENCE [LARGE SCALE MRNA]</scope>
    <source>
        <strain>cv. Nipponbare</strain>
    </source>
</reference>
<reference key="6">
    <citation type="journal article" date="2006" name="Funct. Integr. Genomics">
        <title>Structure and expression analysis of early auxin-responsive Aux/IAA gene family in rice (Oryza sativa).</title>
        <authorList>
            <person name="Jain M."/>
            <person name="Kaur N."/>
            <person name="Garg R."/>
            <person name="Thakur J.K."/>
            <person name="Tyagi A.K."/>
            <person name="Khurana J.P."/>
        </authorList>
    </citation>
    <scope>TISSUE SPECIFICITY</scope>
    <scope>INDUCTION</scope>
    <scope>NOMENCLATURE</scope>
</reference>
<accession>Q6K846</accession>
<accession>Q0DWN7</accession>
<accession>Q948F5</accession>
<evidence type="ECO:0000250" key="1"/>
<evidence type="ECO:0000255" key="2">
    <source>
        <dbReference type="PROSITE-ProRule" id="PRU01081"/>
    </source>
</evidence>
<evidence type="ECO:0000256" key="3">
    <source>
        <dbReference type="SAM" id="MobiDB-lite"/>
    </source>
</evidence>
<evidence type="ECO:0000269" key="4">
    <source>
    </source>
</evidence>
<evidence type="ECO:0000305" key="5"/>
<evidence type="ECO:0000312" key="6">
    <source>
        <dbReference type="EMBL" id="EAZ24996.1"/>
    </source>
</evidence>
<feature type="chain" id="PRO_0000223208" description="Auxin-responsive protein IAA9">
    <location>
        <begin position="1"/>
        <end position="182"/>
    </location>
</feature>
<feature type="domain" description="PB1" evidence="2">
    <location>
        <begin position="92"/>
        <end position="182"/>
    </location>
</feature>
<feature type="region of interest" description="Disordered" evidence="3">
    <location>
        <begin position="1"/>
        <end position="41"/>
    </location>
</feature>
<feature type="short sequence motif" description="EAR-like (transcriptional repression)" evidence="1">
    <location>
        <begin position="3"/>
        <end position="7"/>
    </location>
</feature>
<feature type="compositionally biased region" description="Low complexity" evidence="3">
    <location>
        <begin position="32"/>
        <end position="41"/>
    </location>
</feature>
<dbReference type="EMBL" id="AC069158">
    <property type="protein sequence ID" value="AAK98708.1"/>
    <property type="molecule type" value="Genomic_DNA"/>
</dbReference>
<dbReference type="EMBL" id="AP004240">
    <property type="protein sequence ID" value="BAD19421.1"/>
    <property type="molecule type" value="Genomic_DNA"/>
</dbReference>
<dbReference type="EMBL" id="AP008208">
    <property type="protein sequence ID" value="BAF10351.1"/>
    <property type="molecule type" value="Genomic_DNA"/>
</dbReference>
<dbReference type="EMBL" id="AP014958">
    <property type="protein sequence ID" value="BAS81456.1"/>
    <property type="molecule type" value="Genomic_DNA"/>
</dbReference>
<dbReference type="EMBL" id="CM000139">
    <property type="protein sequence ID" value="EAZ24996.1"/>
    <property type="molecule type" value="Genomic_DNA"/>
</dbReference>
<dbReference type="EMBL" id="AK073365">
    <property type="protein sequence ID" value="BAG93420.1"/>
    <property type="molecule type" value="mRNA"/>
</dbReference>
<dbReference type="RefSeq" id="XP_015627246.1">
    <property type="nucleotide sequence ID" value="XM_015771760.1"/>
</dbReference>
<dbReference type="SMR" id="Q6K846"/>
<dbReference type="FunCoup" id="Q6K846">
    <property type="interactions" value="18"/>
</dbReference>
<dbReference type="STRING" id="39947.Q6K846"/>
<dbReference type="PaxDb" id="39947-Q6K846"/>
<dbReference type="EnsemblPlants" id="Os02t0805100-01">
    <property type="protein sequence ID" value="Os02t0805100-01"/>
    <property type="gene ID" value="Os02g0805100"/>
</dbReference>
<dbReference type="Gramene" id="Os02t0805100-01">
    <property type="protein sequence ID" value="Os02t0805100-01"/>
    <property type="gene ID" value="Os02g0805100"/>
</dbReference>
<dbReference type="KEGG" id="dosa:Os02g0805100"/>
<dbReference type="eggNOG" id="ENOG502S29N">
    <property type="taxonomic scope" value="Eukaryota"/>
</dbReference>
<dbReference type="HOGENOM" id="CLU_049393_4_1_1"/>
<dbReference type="InParanoid" id="Q6K846"/>
<dbReference type="OMA" id="AGCPHAK"/>
<dbReference type="OrthoDB" id="652411at2759"/>
<dbReference type="PlantReactome" id="R-OSA-5608118">
    <property type="pathway name" value="Auxin signalling"/>
</dbReference>
<dbReference type="Proteomes" id="UP000000763">
    <property type="component" value="Chromosome 2"/>
</dbReference>
<dbReference type="Proteomes" id="UP000007752">
    <property type="component" value="Chromosome 2"/>
</dbReference>
<dbReference type="Proteomes" id="UP000059680">
    <property type="component" value="Chromosome 2"/>
</dbReference>
<dbReference type="GO" id="GO:0005634">
    <property type="term" value="C:nucleus"/>
    <property type="evidence" value="ECO:0007669"/>
    <property type="project" value="UniProtKB-SubCell"/>
</dbReference>
<dbReference type="GO" id="GO:0009734">
    <property type="term" value="P:auxin-activated signaling pathway"/>
    <property type="evidence" value="ECO:0007669"/>
    <property type="project" value="UniProtKB-KW"/>
</dbReference>
<dbReference type="GO" id="GO:0006355">
    <property type="term" value="P:regulation of DNA-templated transcription"/>
    <property type="evidence" value="ECO:0007669"/>
    <property type="project" value="InterPro"/>
</dbReference>
<dbReference type="GO" id="GO:0009733">
    <property type="term" value="P:response to auxin"/>
    <property type="evidence" value="ECO:0000305"/>
    <property type="project" value="Gramene"/>
</dbReference>
<dbReference type="Gene3D" id="3.10.20.90">
    <property type="entry name" value="Phosphatidylinositol 3-kinase Catalytic Subunit, Chain A, domain 1"/>
    <property type="match status" value="1"/>
</dbReference>
<dbReference type="InterPro" id="IPR033389">
    <property type="entry name" value="AUX/IAA_dom"/>
</dbReference>
<dbReference type="InterPro" id="IPR003311">
    <property type="entry name" value="AUX_IAA"/>
</dbReference>
<dbReference type="InterPro" id="IPR053793">
    <property type="entry name" value="PB1-like"/>
</dbReference>
<dbReference type="PANTHER" id="PTHR31734">
    <property type="entry name" value="AUXIN-RESPONSIVE PROTEIN IAA17"/>
    <property type="match status" value="1"/>
</dbReference>
<dbReference type="PANTHER" id="PTHR31734:SF88">
    <property type="entry name" value="AUXIN-RESPONSIVE PROTEIN IAA9"/>
    <property type="match status" value="1"/>
</dbReference>
<dbReference type="Pfam" id="PF02309">
    <property type="entry name" value="AUX_IAA"/>
    <property type="match status" value="1"/>
</dbReference>
<dbReference type="SUPFAM" id="SSF54277">
    <property type="entry name" value="CAD &amp; PB1 domains"/>
    <property type="match status" value="1"/>
</dbReference>
<dbReference type="PROSITE" id="PS51745">
    <property type="entry name" value="PB1"/>
    <property type="match status" value="1"/>
</dbReference>
<proteinExistence type="evidence at transcript level"/>
<comment type="function">
    <text evidence="1">Aux/IAA proteins are short-lived transcriptional factors that function as repressors of early auxin response genes at low auxin concentrations.</text>
</comment>
<comment type="subunit">
    <text evidence="1">Homodimers and heterodimers.</text>
</comment>
<comment type="subcellular location">
    <subcellularLocation>
        <location evidence="1">Nucleus</location>
    </subcellularLocation>
</comment>
<comment type="tissue specificity">
    <text evidence="4">Expressed in etiolated shoots and flowers.</text>
</comment>
<comment type="induction">
    <text evidence="4">Highly induced by auxin.</text>
</comment>
<comment type="similarity">
    <text evidence="5">Belongs to the Aux/IAA family.</text>
</comment>
<name>IAA9_ORYSJ</name>